<sequence length="116" mass="12524">MTEQAEDALPIRFTDAAASKVKTLLEEEENDALKLRVYVTGGGCSGFQYGFTFDEKVNEGDFTVEKQGVQLVVDPMSLQYLVGGEVDYTSGLEGSRFFVKNPNATTTCGCGASFSV</sequence>
<protein>
    <recommendedName>
        <fullName evidence="1">Iron-sulfur cluster insertion protein ErpA</fullName>
    </recommendedName>
</protein>
<gene>
    <name evidence="1" type="primary">erpA</name>
    <name type="ordered locus">Spea_0985</name>
</gene>
<reference key="1">
    <citation type="submission" date="2007-10" db="EMBL/GenBank/DDBJ databases">
        <title>Complete sequence of Shewanella pealeana ATCC 700345.</title>
        <authorList>
            <consortium name="US DOE Joint Genome Institute"/>
            <person name="Copeland A."/>
            <person name="Lucas S."/>
            <person name="Lapidus A."/>
            <person name="Barry K."/>
            <person name="Glavina del Rio T."/>
            <person name="Dalin E."/>
            <person name="Tice H."/>
            <person name="Pitluck S."/>
            <person name="Chertkov O."/>
            <person name="Brettin T."/>
            <person name="Bruce D."/>
            <person name="Detter J.C."/>
            <person name="Han C."/>
            <person name="Schmutz J."/>
            <person name="Larimer F."/>
            <person name="Land M."/>
            <person name="Hauser L."/>
            <person name="Kyrpides N."/>
            <person name="Kim E."/>
            <person name="Zhao J.-S.Z."/>
            <person name="Manno D."/>
            <person name="Hawari J."/>
            <person name="Richardson P."/>
        </authorList>
    </citation>
    <scope>NUCLEOTIDE SEQUENCE [LARGE SCALE GENOMIC DNA]</scope>
    <source>
        <strain>ATCC 700345 / ANG-SQ1</strain>
    </source>
</reference>
<dbReference type="EMBL" id="CP000851">
    <property type="protein sequence ID" value="ABV86312.1"/>
    <property type="molecule type" value="Genomic_DNA"/>
</dbReference>
<dbReference type="RefSeq" id="WP_012154245.1">
    <property type="nucleotide sequence ID" value="NC_009901.1"/>
</dbReference>
<dbReference type="SMR" id="A8H175"/>
<dbReference type="STRING" id="398579.Spea_0985"/>
<dbReference type="KEGG" id="spl:Spea_0985"/>
<dbReference type="eggNOG" id="COG0316">
    <property type="taxonomic scope" value="Bacteria"/>
</dbReference>
<dbReference type="HOGENOM" id="CLU_069054_5_3_6"/>
<dbReference type="OrthoDB" id="9801228at2"/>
<dbReference type="Proteomes" id="UP000002608">
    <property type="component" value="Chromosome"/>
</dbReference>
<dbReference type="GO" id="GO:0005829">
    <property type="term" value="C:cytosol"/>
    <property type="evidence" value="ECO:0007669"/>
    <property type="project" value="TreeGrafter"/>
</dbReference>
<dbReference type="GO" id="GO:0051537">
    <property type="term" value="F:2 iron, 2 sulfur cluster binding"/>
    <property type="evidence" value="ECO:0007669"/>
    <property type="project" value="TreeGrafter"/>
</dbReference>
<dbReference type="GO" id="GO:0051539">
    <property type="term" value="F:4 iron, 4 sulfur cluster binding"/>
    <property type="evidence" value="ECO:0007669"/>
    <property type="project" value="TreeGrafter"/>
</dbReference>
<dbReference type="GO" id="GO:0005506">
    <property type="term" value="F:iron ion binding"/>
    <property type="evidence" value="ECO:0007669"/>
    <property type="project" value="UniProtKB-UniRule"/>
</dbReference>
<dbReference type="GO" id="GO:0016226">
    <property type="term" value="P:iron-sulfur cluster assembly"/>
    <property type="evidence" value="ECO:0007669"/>
    <property type="project" value="UniProtKB-UniRule"/>
</dbReference>
<dbReference type="FunFam" id="2.60.300.12:FF:000002">
    <property type="entry name" value="Iron-sulfur cluster insertion protein ErpA"/>
    <property type="match status" value="1"/>
</dbReference>
<dbReference type="Gene3D" id="2.60.300.12">
    <property type="entry name" value="HesB-like domain"/>
    <property type="match status" value="1"/>
</dbReference>
<dbReference type="HAMAP" id="MF_01380">
    <property type="entry name" value="Fe_S_insert_ErpA"/>
    <property type="match status" value="1"/>
</dbReference>
<dbReference type="InterPro" id="IPR000361">
    <property type="entry name" value="FeS_biogenesis"/>
</dbReference>
<dbReference type="InterPro" id="IPR016092">
    <property type="entry name" value="FeS_cluster_insertion"/>
</dbReference>
<dbReference type="InterPro" id="IPR017870">
    <property type="entry name" value="FeS_cluster_insertion_CS"/>
</dbReference>
<dbReference type="InterPro" id="IPR023063">
    <property type="entry name" value="FeS_cluster_insertion_RrpA"/>
</dbReference>
<dbReference type="InterPro" id="IPR035903">
    <property type="entry name" value="HesB-like_dom_sf"/>
</dbReference>
<dbReference type="NCBIfam" id="TIGR00049">
    <property type="entry name" value="iron-sulfur cluster assembly accessory protein"/>
    <property type="match status" value="1"/>
</dbReference>
<dbReference type="NCBIfam" id="NF010147">
    <property type="entry name" value="PRK13623.1"/>
    <property type="match status" value="1"/>
</dbReference>
<dbReference type="PANTHER" id="PTHR43011">
    <property type="entry name" value="IRON-SULFUR CLUSTER ASSEMBLY 2 HOMOLOG, MITOCHONDRIAL"/>
    <property type="match status" value="1"/>
</dbReference>
<dbReference type="PANTHER" id="PTHR43011:SF1">
    <property type="entry name" value="IRON-SULFUR CLUSTER ASSEMBLY 2 HOMOLOG, MITOCHONDRIAL"/>
    <property type="match status" value="1"/>
</dbReference>
<dbReference type="Pfam" id="PF01521">
    <property type="entry name" value="Fe-S_biosyn"/>
    <property type="match status" value="1"/>
</dbReference>
<dbReference type="SUPFAM" id="SSF89360">
    <property type="entry name" value="HesB-like domain"/>
    <property type="match status" value="1"/>
</dbReference>
<dbReference type="PROSITE" id="PS01152">
    <property type="entry name" value="HESB"/>
    <property type="match status" value="1"/>
</dbReference>
<keyword id="KW-0408">Iron</keyword>
<keyword id="KW-0411">Iron-sulfur</keyword>
<keyword id="KW-0479">Metal-binding</keyword>
<keyword id="KW-1185">Reference proteome</keyword>
<accession>A8H175</accession>
<comment type="function">
    <text evidence="1">Required for insertion of 4Fe-4S clusters for at least IspG.</text>
</comment>
<comment type="cofactor">
    <cofactor evidence="1">
        <name>iron-sulfur cluster</name>
        <dbReference type="ChEBI" id="CHEBI:30408"/>
    </cofactor>
    <text evidence="1">Binds 1 iron-sulfur cluster per subunit.</text>
</comment>
<comment type="subunit">
    <text evidence="1">Homodimer.</text>
</comment>
<comment type="similarity">
    <text evidence="1">Belongs to the HesB/IscA family.</text>
</comment>
<evidence type="ECO:0000255" key="1">
    <source>
        <dbReference type="HAMAP-Rule" id="MF_01380"/>
    </source>
</evidence>
<feature type="chain" id="PRO_1000087302" description="Iron-sulfur cluster insertion protein ErpA">
    <location>
        <begin position="1"/>
        <end position="116"/>
    </location>
</feature>
<feature type="binding site" evidence="1">
    <location>
        <position position="44"/>
    </location>
    <ligand>
        <name>iron-sulfur cluster</name>
        <dbReference type="ChEBI" id="CHEBI:30408"/>
    </ligand>
</feature>
<feature type="binding site" evidence="1">
    <location>
        <position position="108"/>
    </location>
    <ligand>
        <name>iron-sulfur cluster</name>
        <dbReference type="ChEBI" id="CHEBI:30408"/>
    </ligand>
</feature>
<feature type="binding site" evidence="1">
    <location>
        <position position="110"/>
    </location>
    <ligand>
        <name>iron-sulfur cluster</name>
        <dbReference type="ChEBI" id="CHEBI:30408"/>
    </ligand>
</feature>
<proteinExistence type="inferred from homology"/>
<organism>
    <name type="scientific">Shewanella pealeana (strain ATCC 700345 / ANG-SQ1)</name>
    <dbReference type="NCBI Taxonomy" id="398579"/>
    <lineage>
        <taxon>Bacteria</taxon>
        <taxon>Pseudomonadati</taxon>
        <taxon>Pseudomonadota</taxon>
        <taxon>Gammaproteobacteria</taxon>
        <taxon>Alteromonadales</taxon>
        <taxon>Shewanellaceae</taxon>
        <taxon>Shewanella</taxon>
    </lineage>
</organism>
<name>ERPA_SHEPA</name>